<name>RS5_NITWN</name>
<proteinExistence type="inferred from homology"/>
<feature type="chain" id="PRO_0000230351" description="Small ribosomal subunit protein uS5">
    <location>
        <begin position="1"/>
        <end position="191"/>
    </location>
</feature>
<feature type="domain" description="S5 DRBM" evidence="1">
    <location>
        <begin position="23"/>
        <end position="86"/>
    </location>
</feature>
<feature type="region of interest" description="Disordered" evidence="2">
    <location>
        <begin position="1"/>
        <end position="20"/>
    </location>
</feature>
<gene>
    <name evidence="1" type="primary">rpsE</name>
    <name type="ordered locus">Nwi_1381</name>
</gene>
<organism>
    <name type="scientific">Nitrobacter winogradskyi (strain ATCC 25391 / DSM 10237 / CIP 104748 / NCIMB 11846 / Nb-255)</name>
    <dbReference type="NCBI Taxonomy" id="323098"/>
    <lineage>
        <taxon>Bacteria</taxon>
        <taxon>Pseudomonadati</taxon>
        <taxon>Pseudomonadota</taxon>
        <taxon>Alphaproteobacteria</taxon>
        <taxon>Hyphomicrobiales</taxon>
        <taxon>Nitrobacteraceae</taxon>
        <taxon>Nitrobacter</taxon>
    </lineage>
</organism>
<reference key="1">
    <citation type="journal article" date="2006" name="Appl. Environ. Microbiol.">
        <title>Genome sequence of the chemolithoautotrophic nitrite-oxidizing bacterium Nitrobacter winogradskyi Nb-255.</title>
        <authorList>
            <person name="Starkenburg S.R."/>
            <person name="Chain P.S.G."/>
            <person name="Sayavedra-Soto L.A."/>
            <person name="Hauser L."/>
            <person name="Land M.L."/>
            <person name="Larimer F.W."/>
            <person name="Malfatti S.A."/>
            <person name="Klotz M.G."/>
            <person name="Bottomley P.J."/>
            <person name="Arp D.J."/>
            <person name="Hickey W.J."/>
        </authorList>
    </citation>
    <scope>NUCLEOTIDE SEQUENCE [LARGE SCALE GENOMIC DNA]</scope>
    <source>
        <strain>ATCC 25391 / DSM 10237 / CIP 104748 / NCIMB 11846 / Nb-255</strain>
    </source>
</reference>
<dbReference type="EMBL" id="CP000115">
    <property type="protein sequence ID" value="ABA04642.1"/>
    <property type="molecule type" value="Genomic_DNA"/>
</dbReference>
<dbReference type="RefSeq" id="WP_011314655.1">
    <property type="nucleotide sequence ID" value="NC_007406.1"/>
</dbReference>
<dbReference type="SMR" id="Q3SSU9"/>
<dbReference type="STRING" id="323098.Nwi_1381"/>
<dbReference type="KEGG" id="nwi:Nwi_1381"/>
<dbReference type="eggNOG" id="COG0098">
    <property type="taxonomic scope" value="Bacteria"/>
</dbReference>
<dbReference type="HOGENOM" id="CLU_065898_2_2_5"/>
<dbReference type="OrthoDB" id="9809045at2"/>
<dbReference type="Proteomes" id="UP000002531">
    <property type="component" value="Chromosome"/>
</dbReference>
<dbReference type="GO" id="GO:0015935">
    <property type="term" value="C:small ribosomal subunit"/>
    <property type="evidence" value="ECO:0007669"/>
    <property type="project" value="InterPro"/>
</dbReference>
<dbReference type="GO" id="GO:0019843">
    <property type="term" value="F:rRNA binding"/>
    <property type="evidence" value="ECO:0007669"/>
    <property type="project" value="UniProtKB-UniRule"/>
</dbReference>
<dbReference type="GO" id="GO:0003735">
    <property type="term" value="F:structural constituent of ribosome"/>
    <property type="evidence" value="ECO:0007669"/>
    <property type="project" value="InterPro"/>
</dbReference>
<dbReference type="GO" id="GO:0006412">
    <property type="term" value="P:translation"/>
    <property type="evidence" value="ECO:0007669"/>
    <property type="project" value="UniProtKB-UniRule"/>
</dbReference>
<dbReference type="FunFam" id="3.30.160.20:FF:000001">
    <property type="entry name" value="30S ribosomal protein S5"/>
    <property type="match status" value="1"/>
</dbReference>
<dbReference type="FunFam" id="3.30.230.10:FF:000002">
    <property type="entry name" value="30S ribosomal protein S5"/>
    <property type="match status" value="1"/>
</dbReference>
<dbReference type="Gene3D" id="3.30.160.20">
    <property type="match status" value="1"/>
</dbReference>
<dbReference type="Gene3D" id="3.30.230.10">
    <property type="match status" value="1"/>
</dbReference>
<dbReference type="HAMAP" id="MF_01307_B">
    <property type="entry name" value="Ribosomal_uS5_B"/>
    <property type="match status" value="1"/>
</dbReference>
<dbReference type="InterPro" id="IPR020568">
    <property type="entry name" value="Ribosomal_Su5_D2-typ_SF"/>
</dbReference>
<dbReference type="InterPro" id="IPR000851">
    <property type="entry name" value="Ribosomal_uS5"/>
</dbReference>
<dbReference type="InterPro" id="IPR005712">
    <property type="entry name" value="Ribosomal_uS5_bac-type"/>
</dbReference>
<dbReference type="InterPro" id="IPR005324">
    <property type="entry name" value="Ribosomal_uS5_C"/>
</dbReference>
<dbReference type="InterPro" id="IPR013810">
    <property type="entry name" value="Ribosomal_uS5_N"/>
</dbReference>
<dbReference type="InterPro" id="IPR018192">
    <property type="entry name" value="Ribosomal_uS5_N_CS"/>
</dbReference>
<dbReference type="InterPro" id="IPR014721">
    <property type="entry name" value="Ribsml_uS5_D2-typ_fold_subgr"/>
</dbReference>
<dbReference type="NCBIfam" id="TIGR01021">
    <property type="entry name" value="rpsE_bact"/>
    <property type="match status" value="1"/>
</dbReference>
<dbReference type="PANTHER" id="PTHR48277">
    <property type="entry name" value="MITOCHONDRIAL RIBOSOMAL PROTEIN S5"/>
    <property type="match status" value="1"/>
</dbReference>
<dbReference type="PANTHER" id="PTHR48277:SF1">
    <property type="entry name" value="MITOCHONDRIAL RIBOSOMAL PROTEIN S5"/>
    <property type="match status" value="1"/>
</dbReference>
<dbReference type="Pfam" id="PF00333">
    <property type="entry name" value="Ribosomal_S5"/>
    <property type="match status" value="1"/>
</dbReference>
<dbReference type="Pfam" id="PF03719">
    <property type="entry name" value="Ribosomal_S5_C"/>
    <property type="match status" value="1"/>
</dbReference>
<dbReference type="SUPFAM" id="SSF54768">
    <property type="entry name" value="dsRNA-binding domain-like"/>
    <property type="match status" value="1"/>
</dbReference>
<dbReference type="SUPFAM" id="SSF54211">
    <property type="entry name" value="Ribosomal protein S5 domain 2-like"/>
    <property type="match status" value="1"/>
</dbReference>
<dbReference type="PROSITE" id="PS00585">
    <property type="entry name" value="RIBOSOMAL_S5"/>
    <property type="match status" value="1"/>
</dbReference>
<dbReference type="PROSITE" id="PS50881">
    <property type="entry name" value="S5_DSRBD"/>
    <property type="match status" value="1"/>
</dbReference>
<protein>
    <recommendedName>
        <fullName evidence="1">Small ribosomal subunit protein uS5</fullName>
    </recommendedName>
    <alternativeName>
        <fullName evidence="3">30S ribosomal protein S5</fullName>
    </alternativeName>
</protein>
<keyword id="KW-1185">Reference proteome</keyword>
<keyword id="KW-0687">Ribonucleoprotein</keyword>
<keyword id="KW-0689">Ribosomal protein</keyword>
<keyword id="KW-0694">RNA-binding</keyword>
<keyword id="KW-0699">rRNA-binding</keyword>
<sequence>MAGERERGGRERSRDREERDSEFVDKLVHINRVAKVVKGGKRFGFAALVVIGDQKGRVGFGHGKAREVPEAIRKATESAKRNLTRVPLREGRTLHHDIAGRHGAGRVYLRAAPAGTGIIAGGPMRAVFETLGIQDVVAKSVGSSNPYNMVRATFDALKHQDSPRSVSARRNIKVSTLQSRRVGGDAEAVAE</sequence>
<accession>Q3SSU9</accession>
<comment type="function">
    <text evidence="1">With S4 and S12 plays an important role in translational accuracy.</text>
</comment>
<comment type="function">
    <text evidence="1">Located at the back of the 30S subunit body where it stabilizes the conformation of the head with respect to the body.</text>
</comment>
<comment type="subunit">
    <text evidence="1">Part of the 30S ribosomal subunit. Contacts proteins S4 and S8.</text>
</comment>
<comment type="domain">
    <text>The N-terminal domain interacts with the head of the 30S subunit; the C-terminal domain interacts with the body and contacts protein S4. The interaction surface between S4 and S5 is involved in control of translational fidelity.</text>
</comment>
<comment type="similarity">
    <text evidence="1">Belongs to the universal ribosomal protein uS5 family.</text>
</comment>
<evidence type="ECO:0000255" key="1">
    <source>
        <dbReference type="HAMAP-Rule" id="MF_01307"/>
    </source>
</evidence>
<evidence type="ECO:0000256" key="2">
    <source>
        <dbReference type="SAM" id="MobiDB-lite"/>
    </source>
</evidence>
<evidence type="ECO:0000305" key="3"/>